<organism>
    <name type="scientific">Rhizobium etli (strain ATCC 51251 / DSM 11541 / JCM 21823 / NBRC 15573 / CFN 42)</name>
    <dbReference type="NCBI Taxonomy" id="347834"/>
    <lineage>
        <taxon>Bacteria</taxon>
        <taxon>Pseudomonadati</taxon>
        <taxon>Pseudomonadota</taxon>
        <taxon>Alphaproteobacteria</taxon>
        <taxon>Hyphomicrobiales</taxon>
        <taxon>Rhizobiaceae</taxon>
        <taxon>Rhizobium/Agrobacterium group</taxon>
        <taxon>Rhizobium</taxon>
    </lineage>
</organism>
<proteinExistence type="inferred from homology"/>
<dbReference type="EC" id="6.3.4.20" evidence="1"/>
<dbReference type="EMBL" id="CP000133">
    <property type="protein sequence ID" value="ABC92466.1"/>
    <property type="molecule type" value="Genomic_DNA"/>
</dbReference>
<dbReference type="RefSeq" id="WP_011426921.1">
    <property type="nucleotide sequence ID" value="NC_007761.1"/>
</dbReference>
<dbReference type="SMR" id="Q2K3X0"/>
<dbReference type="KEGG" id="ret:RHE_CH03711"/>
<dbReference type="eggNOG" id="COG0603">
    <property type="taxonomic scope" value="Bacteria"/>
</dbReference>
<dbReference type="HOGENOM" id="CLU_081854_1_0_5"/>
<dbReference type="OrthoDB" id="9789567at2"/>
<dbReference type="UniPathway" id="UPA00391"/>
<dbReference type="Proteomes" id="UP000001936">
    <property type="component" value="Chromosome"/>
</dbReference>
<dbReference type="GO" id="GO:0005524">
    <property type="term" value="F:ATP binding"/>
    <property type="evidence" value="ECO:0007669"/>
    <property type="project" value="UniProtKB-UniRule"/>
</dbReference>
<dbReference type="GO" id="GO:0016879">
    <property type="term" value="F:ligase activity, forming carbon-nitrogen bonds"/>
    <property type="evidence" value="ECO:0007669"/>
    <property type="project" value="UniProtKB-UniRule"/>
</dbReference>
<dbReference type="GO" id="GO:0008270">
    <property type="term" value="F:zinc ion binding"/>
    <property type="evidence" value="ECO:0007669"/>
    <property type="project" value="UniProtKB-UniRule"/>
</dbReference>
<dbReference type="GO" id="GO:0008616">
    <property type="term" value="P:queuosine biosynthetic process"/>
    <property type="evidence" value="ECO:0007669"/>
    <property type="project" value="UniProtKB-UniRule"/>
</dbReference>
<dbReference type="CDD" id="cd01995">
    <property type="entry name" value="QueC-like"/>
    <property type="match status" value="1"/>
</dbReference>
<dbReference type="Gene3D" id="3.40.50.620">
    <property type="entry name" value="HUPs"/>
    <property type="match status" value="1"/>
</dbReference>
<dbReference type="HAMAP" id="MF_01633">
    <property type="entry name" value="QueC"/>
    <property type="match status" value="1"/>
</dbReference>
<dbReference type="InterPro" id="IPR018317">
    <property type="entry name" value="QueC"/>
</dbReference>
<dbReference type="InterPro" id="IPR014729">
    <property type="entry name" value="Rossmann-like_a/b/a_fold"/>
</dbReference>
<dbReference type="NCBIfam" id="TIGR00364">
    <property type="entry name" value="7-cyano-7-deazaguanine synthase QueC"/>
    <property type="match status" value="1"/>
</dbReference>
<dbReference type="PANTHER" id="PTHR42914">
    <property type="entry name" value="7-CYANO-7-DEAZAGUANINE SYNTHASE"/>
    <property type="match status" value="1"/>
</dbReference>
<dbReference type="PANTHER" id="PTHR42914:SF1">
    <property type="entry name" value="7-CYANO-7-DEAZAGUANINE SYNTHASE"/>
    <property type="match status" value="1"/>
</dbReference>
<dbReference type="Pfam" id="PF06508">
    <property type="entry name" value="QueC"/>
    <property type="match status" value="1"/>
</dbReference>
<dbReference type="PIRSF" id="PIRSF006293">
    <property type="entry name" value="ExsB"/>
    <property type="match status" value="1"/>
</dbReference>
<dbReference type="SUPFAM" id="SSF52402">
    <property type="entry name" value="Adenine nucleotide alpha hydrolases-like"/>
    <property type="match status" value="1"/>
</dbReference>
<comment type="function">
    <text evidence="1">Catalyzes the ATP-dependent conversion of 7-carboxy-7-deazaguanine (CDG) to 7-cyano-7-deazaguanine (preQ(0)).</text>
</comment>
<comment type="catalytic activity">
    <reaction evidence="1">
        <text>7-carboxy-7-deazaguanine + NH4(+) + ATP = 7-cyano-7-deazaguanine + ADP + phosphate + H2O + H(+)</text>
        <dbReference type="Rhea" id="RHEA:27982"/>
        <dbReference type="ChEBI" id="CHEBI:15377"/>
        <dbReference type="ChEBI" id="CHEBI:15378"/>
        <dbReference type="ChEBI" id="CHEBI:28938"/>
        <dbReference type="ChEBI" id="CHEBI:30616"/>
        <dbReference type="ChEBI" id="CHEBI:43474"/>
        <dbReference type="ChEBI" id="CHEBI:45075"/>
        <dbReference type="ChEBI" id="CHEBI:61036"/>
        <dbReference type="ChEBI" id="CHEBI:456216"/>
        <dbReference type="EC" id="6.3.4.20"/>
    </reaction>
</comment>
<comment type="cofactor">
    <cofactor evidence="1">
        <name>Zn(2+)</name>
        <dbReference type="ChEBI" id="CHEBI:29105"/>
    </cofactor>
    <text evidence="1">Binds 1 zinc ion per subunit.</text>
</comment>
<comment type="pathway">
    <text evidence="1">Purine metabolism; 7-cyano-7-deazaguanine biosynthesis.</text>
</comment>
<comment type="similarity">
    <text evidence="1">Belongs to the QueC family.</text>
</comment>
<accession>Q2K3X0</accession>
<sequence>MKTIVVCSGGLDSVSLAHRTASEEQLIGLVSFDYGQRHRKELDFAAKCAARLAVPHHIIDIAAIGGHLSGSALTDNVEVPDGHYAEETMKATVVPNRNAIMLAIAFGLAAAQKADAVAVAVHGGDHFIYPDCRPGFIDAFQRMQNEALDGYASVKLLAPYVEVSKAAIVADGTRHGTPFAETWSCYKGGSLHCGRCGTCVERREAFHLAGVSDPTEYEDRDFWKAAASQYSAAEVR</sequence>
<feature type="chain" id="PRO_0000246898" description="7-cyano-7-deazaguanine synthase">
    <location>
        <begin position="1"/>
        <end position="236"/>
    </location>
</feature>
<feature type="binding site" evidence="1">
    <location>
        <begin position="7"/>
        <end position="17"/>
    </location>
    <ligand>
        <name>ATP</name>
        <dbReference type="ChEBI" id="CHEBI:30616"/>
    </ligand>
</feature>
<feature type="binding site" evidence="1">
    <location>
        <position position="185"/>
    </location>
    <ligand>
        <name>Zn(2+)</name>
        <dbReference type="ChEBI" id="CHEBI:29105"/>
    </ligand>
</feature>
<feature type="binding site" evidence="1">
    <location>
        <position position="193"/>
    </location>
    <ligand>
        <name>Zn(2+)</name>
        <dbReference type="ChEBI" id="CHEBI:29105"/>
    </ligand>
</feature>
<feature type="binding site" evidence="1">
    <location>
        <position position="196"/>
    </location>
    <ligand>
        <name>Zn(2+)</name>
        <dbReference type="ChEBI" id="CHEBI:29105"/>
    </ligand>
</feature>
<feature type="binding site" evidence="1">
    <location>
        <position position="199"/>
    </location>
    <ligand>
        <name>Zn(2+)</name>
        <dbReference type="ChEBI" id="CHEBI:29105"/>
    </ligand>
</feature>
<keyword id="KW-0067">ATP-binding</keyword>
<keyword id="KW-0436">Ligase</keyword>
<keyword id="KW-0479">Metal-binding</keyword>
<keyword id="KW-0547">Nucleotide-binding</keyword>
<keyword id="KW-0671">Queuosine biosynthesis</keyword>
<keyword id="KW-1185">Reference proteome</keyword>
<keyword id="KW-0862">Zinc</keyword>
<gene>
    <name evidence="1" type="primary">queC</name>
    <name type="ordered locus">RHE_CH03711</name>
</gene>
<protein>
    <recommendedName>
        <fullName evidence="1">7-cyano-7-deazaguanine synthase</fullName>
        <ecNumber evidence="1">6.3.4.20</ecNumber>
    </recommendedName>
    <alternativeName>
        <fullName evidence="1">7-cyano-7-carbaguanine synthase</fullName>
    </alternativeName>
    <alternativeName>
        <fullName evidence="1">PreQ(0) synthase</fullName>
    </alternativeName>
    <alternativeName>
        <fullName evidence="1">Queuosine biosynthesis protein QueC</fullName>
    </alternativeName>
</protein>
<name>QUEC_RHIEC</name>
<evidence type="ECO:0000255" key="1">
    <source>
        <dbReference type="HAMAP-Rule" id="MF_01633"/>
    </source>
</evidence>
<reference key="1">
    <citation type="journal article" date="2006" name="Proc. Natl. Acad. Sci. U.S.A.">
        <title>The partitioned Rhizobium etli genome: genetic and metabolic redundancy in seven interacting replicons.</title>
        <authorList>
            <person name="Gonzalez V."/>
            <person name="Santamaria R.I."/>
            <person name="Bustos P."/>
            <person name="Hernandez-Gonzalez I."/>
            <person name="Medrano-Soto A."/>
            <person name="Moreno-Hagelsieb G."/>
            <person name="Janga S.C."/>
            <person name="Ramirez M.A."/>
            <person name="Jimenez-Jacinto V."/>
            <person name="Collado-Vides J."/>
            <person name="Davila G."/>
        </authorList>
    </citation>
    <scope>NUCLEOTIDE SEQUENCE [LARGE SCALE GENOMIC DNA]</scope>
    <source>
        <strain>ATCC 51251 / DSM 11541 / JCM 21823 / NBRC 15573 / CFN 42</strain>
    </source>
</reference>